<proteinExistence type="evidence at protein level"/>
<feature type="transit peptide" description="Mitochondrion" evidence="2">
    <location>
        <begin position="1"/>
        <end position="42"/>
    </location>
</feature>
<feature type="chain" id="PRO_0000002682" description="ATP synthase subunit gamma, mitochondrial">
    <location>
        <begin position="43"/>
        <end position="325"/>
    </location>
</feature>
<name>ATPG3_ARATH</name>
<keyword id="KW-0066">ATP synthesis</keyword>
<keyword id="KW-0139">CF(1)</keyword>
<keyword id="KW-0375">Hydrogen ion transport</keyword>
<keyword id="KW-0406">Ion transport</keyword>
<keyword id="KW-0472">Membrane</keyword>
<keyword id="KW-0496">Mitochondrion</keyword>
<keyword id="KW-0999">Mitochondrion inner membrane</keyword>
<keyword id="KW-1185">Reference proteome</keyword>
<keyword id="KW-0809">Transit peptide</keyword>
<keyword id="KW-0813">Transport</keyword>
<gene>
    <name type="primary">ATPC</name>
    <name type="ordered locus">At2g33040</name>
    <name type="ORF">F25I18.22</name>
</gene>
<sequence length="325" mass="35448">MAMAVFRREGRRLLPSIAARPIAAIRSPLSSDQEEGLLGVRSISTQVVRNRMKSVKNIQKITKAMKMVAASKLRAVQGRAENSRGLWQPFTALLGDNPSIDVKKSVVVTLSSDKGLCGGINSTVVKVSRALYKLNAGPEKEVQFVIVGEKAKAIMFRDSKNDIVLSVTELNKNPLNYAQVSVLADDILKNVEFDALRIVYNKFHSVVAFLPTVSTVLSPEIIEKESEIGGKLGELDSYEIEGGETKGEILQNLAEFQFSCVMFNAVLENACSEMGARMSAMDSSSRNAGEMLDRLTLTYNRTRQASITTELIEIISGASALEAAK</sequence>
<dbReference type="EMBL" id="D88374">
    <property type="protein sequence ID" value="BAA13599.1"/>
    <property type="molecule type" value="mRNA"/>
</dbReference>
<dbReference type="EMBL" id="AC002334">
    <property type="protein sequence ID" value="AAC04916.1"/>
    <property type="molecule type" value="Genomic_DNA"/>
</dbReference>
<dbReference type="EMBL" id="AC003033">
    <property type="protein sequence ID" value="AAM14859.1"/>
    <property type="molecule type" value="Genomic_DNA"/>
</dbReference>
<dbReference type="EMBL" id="CP002685">
    <property type="protein sequence ID" value="AEC08777.1"/>
    <property type="molecule type" value="Genomic_DNA"/>
</dbReference>
<dbReference type="EMBL" id="AY039513">
    <property type="protein sequence ID" value="AAK62570.1"/>
    <property type="molecule type" value="mRNA"/>
</dbReference>
<dbReference type="EMBL" id="AY062627">
    <property type="protein sequence ID" value="AAL32705.1"/>
    <property type="molecule type" value="mRNA"/>
</dbReference>
<dbReference type="EMBL" id="AY102152">
    <property type="protein sequence ID" value="AAM26719.1"/>
    <property type="molecule type" value="mRNA"/>
</dbReference>
<dbReference type="EMBL" id="AY086685">
    <property type="protein sequence ID" value="AAM63740.1"/>
    <property type="molecule type" value="mRNA"/>
</dbReference>
<dbReference type="PIR" id="F84740">
    <property type="entry name" value="F84740"/>
</dbReference>
<dbReference type="PIR" id="T01103">
    <property type="entry name" value="T01103"/>
</dbReference>
<dbReference type="SMR" id="Q96250"/>
<dbReference type="BioGRID" id="3213">
    <property type="interactions" value="10"/>
</dbReference>
<dbReference type="FunCoup" id="Q96250">
    <property type="interactions" value="3736"/>
</dbReference>
<dbReference type="IntAct" id="Q96250">
    <property type="interactions" value="2"/>
</dbReference>
<dbReference type="STRING" id="3702.Q96250"/>
<dbReference type="iPTMnet" id="Q96250"/>
<dbReference type="SwissPalm" id="Q96250"/>
<dbReference type="PaxDb" id="3702-AT2G33040.1"/>
<dbReference type="ProteomicsDB" id="241004"/>
<dbReference type="EnsemblPlants" id="AT2G33040.1">
    <property type="protein sequence ID" value="AT2G33040.1"/>
    <property type="gene ID" value="AT2G33040"/>
</dbReference>
<dbReference type="Gramene" id="AT2G33040.1">
    <property type="protein sequence ID" value="AT2G33040.1"/>
    <property type="gene ID" value="AT2G33040"/>
</dbReference>
<dbReference type="KEGG" id="ath:AT2G33040"/>
<dbReference type="Araport" id="AT2G33040"/>
<dbReference type="TAIR" id="AT2G33040">
    <property type="gene designation" value="ATP3"/>
</dbReference>
<dbReference type="eggNOG" id="KOG1531">
    <property type="taxonomic scope" value="Eukaryota"/>
</dbReference>
<dbReference type="HOGENOM" id="CLU_050669_4_0_1"/>
<dbReference type="InParanoid" id="Q96250"/>
<dbReference type="OMA" id="EVYIIYT"/>
<dbReference type="OrthoDB" id="1086859at2759"/>
<dbReference type="PhylomeDB" id="Q96250"/>
<dbReference type="BioCyc" id="ARA:AT2G33040-MONOMER"/>
<dbReference type="CD-CODE" id="4299E36E">
    <property type="entry name" value="Nucleolus"/>
</dbReference>
<dbReference type="PRO" id="PR:Q96250"/>
<dbReference type="Proteomes" id="UP000006548">
    <property type="component" value="Chromosome 2"/>
</dbReference>
<dbReference type="ExpressionAtlas" id="Q96250">
    <property type="expression patterns" value="baseline and differential"/>
</dbReference>
<dbReference type="GO" id="GO:0009507">
    <property type="term" value="C:chloroplast"/>
    <property type="evidence" value="ECO:0007005"/>
    <property type="project" value="TAIR"/>
</dbReference>
<dbReference type="GO" id="GO:0005737">
    <property type="term" value="C:cytoplasm"/>
    <property type="evidence" value="ECO:0007005"/>
    <property type="project" value="TAIR"/>
</dbReference>
<dbReference type="GO" id="GO:0005783">
    <property type="term" value="C:endoplasmic reticulum"/>
    <property type="evidence" value="ECO:0007005"/>
    <property type="project" value="TAIR"/>
</dbReference>
<dbReference type="GO" id="GO:0005743">
    <property type="term" value="C:mitochondrial inner membrane"/>
    <property type="evidence" value="ECO:0007669"/>
    <property type="project" value="UniProtKB-SubCell"/>
</dbReference>
<dbReference type="GO" id="GO:0005739">
    <property type="term" value="C:mitochondrion"/>
    <property type="evidence" value="ECO:0000314"/>
    <property type="project" value="TAIR"/>
</dbReference>
<dbReference type="GO" id="GO:0005730">
    <property type="term" value="C:nucleolus"/>
    <property type="evidence" value="ECO:0007005"/>
    <property type="project" value="TAIR"/>
</dbReference>
<dbReference type="GO" id="GO:0005634">
    <property type="term" value="C:nucleus"/>
    <property type="evidence" value="ECO:0007005"/>
    <property type="project" value="TAIR"/>
</dbReference>
<dbReference type="GO" id="GO:0009505">
    <property type="term" value="C:plant-type cell wall"/>
    <property type="evidence" value="ECO:0007005"/>
    <property type="project" value="TAIR"/>
</dbReference>
<dbReference type="GO" id="GO:0045259">
    <property type="term" value="C:proton-transporting ATP synthase complex"/>
    <property type="evidence" value="ECO:0007669"/>
    <property type="project" value="UniProtKB-KW"/>
</dbReference>
<dbReference type="GO" id="GO:0046933">
    <property type="term" value="F:proton-transporting ATP synthase activity, rotational mechanism"/>
    <property type="evidence" value="ECO:0007669"/>
    <property type="project" value="InterPro"/>
</dbReference>
<dbReference type="GO" id="GO:0008270">
    <property type="term" value="F:zinc ion binding"/>
    <property type="evidence" value="ECO:0007005"/>
    <property type="project" value="TAIR"/>
</dbReference>
<dbReference type="CDD" id="cd12151">
    <property type="entry name" value="F1-ATPase_gamma"/>
    <property type="match status" value="1"/>
</dbReference>
<dbReference type="FunFam" id="1.10.287.80:FF:000001">
    <property type="entry name" value="ATP synthase gamma chain"/>
    <property type="match status" value="1"/>
</dbReference>
<dbReference type="FunFam" id="3.40.1380.10:FF:000005">
    <property type="entry name" value="ATP synthase subunit gamma"/>
    <property type="match status" value="1"/>
</dbReference>
<dbReference type="Gene3D" id="3.40.1380.10">
    <property type="match status" value="1"/>
</dbReference>
<dbReference type="Gene3D" id="1.10.287.80">
    <property type="entry name" value="ATP synthase, gamma subunit, helix hairpin domain"/>
    <property type="match status" value="1"/>
</dbReference>
<dbReference type="HAMAP" id="MF_00815">
    <property type="entry name" value="ATP_synth_gamma_bact"/>
    <property type="match status" value="1"/>
</dbReference>
<dbReference type="InterPro" id="IPR035968">
    <property type="entry name" value="ATP_synth_F1_ATPase_gsu"/>
</dbReference>
<dbReference type="InterPro" id="IPR000131">
    <property type="entry name" value="ATP_synth_F1_gsu"/>
</dbReference>
<dbReference type="InterPro" id="IPR023632">
    <property type="entry name" value="ATP_synth_F1_gsu_CS"/>
</dbReference>
<dbReference type="NCBIfam" id="TIGR01146">
    <property type="entry name" value="ATPsyn_F1gamma"/>
    <property type="match status" value="1"/>
</dbReference>
<dbReference type="PANTHER" id="PTHR11693">
    <property type="entry name" value="ATP SYNTHASE GAMMA CHAIN"/>
    <property type="match status" value="1"/>
</dbReference>
<dbReference type="PANTHER" id="PTHR11693:SF22">
    <property type="entry name" value="ATP SYNTHASE SUBUNIT GAMMA, MITOCHONDRIAL"/>
    <property type="match status" value="1"/>
</dbReference>
<dbReference type="Pfam" id="PF00231">
    <property type="entry name" value="ATP-synt"/>
    <property type="match status" value="1"/>
</dbReference>
<dbReference type="PIRSF" id="PIRSF039089">
    <property type="entry name" value="ATP_synthase_gamma"/>
    <property type="match status" value="1"/>
</dbReference>
<dbReference type="PRINTS" id="PR00126">
    <property type="entry name" value="ATPASEGAMMA"/>
</dbReference>
<dbReference type="SUPFAM" id="SSF52943">
    <property type="entry name" value="ATP synthase (F1-ATPase), gamma subunit"/>
    <property type="match status" value="1"/>
</dbReference>
<dbReference type="PROSITE" id="PS00153">
    <property type="entry name" value="ATPASE_GAMMA"/>
    <property type="match status" value="1"/>
</dbReference>
<accession>Q96250</accession>
<accession>Q7GB12</accession>
<reference key="1">
    <citation type="online journal article" date="1996" name="Plant Gene Register">
        <title>Nucleotide sequence of cDNAs encoding gamma, delta, delta-prime, and epsilon subunits of mitochondrial F1-ATPase in Arabidopsis thaliana.</title>
        <authorList>
            <person name="Sakamoto W."/>
            <person name="Wintz H."/>
        </authorList>
        <locator>PGR96-125</locator>
    </citation>
    <scope>NUCLEOTIDE SEQUENCE [MRNA]</scope>
    <source>
        <strain>cv. Columbia</strain>
    </source>
</reference>
<reference key="2">
    <citation type="journal article" date="1999" name="Nature">
        <title>Sequence and analysis of chromosome 2 of the plant Arabidopsis thaliana.</title>
        <authorList>
            <person name="Lin X."/>
            <person name="Kaul S."/>
            <person name="Rounsley S.D."/>
            <person name="Shea T.P."/>
            <person name="Benito M.-I."/>
            <person name="Town C.D."/>
            <person name="Fujii C.Y."/>
            <person name="Mason T.M."/>
            <person name="Bowman C.L."/>
            <person name="Barnstead M.E."/>
            <person name="Feldblyum T.V."/>
            <person name="Buell C.R."/>
            <person name="Ketchum K.A."/>
            <person name="Lee J.J."/>
            <person name="Ronning C.M."/>
            <person name="Koo H.L."/>
            <person name="Moffat K.S."/>
            <person name="Cronin L.A."/>
            <person name="Shen M."/>
            <person name="Pai G."/>
            <person name="Van Aken S."/>
            <person name="Umayam L."/>
            <person name="Tallon L.J."/>
            <person name="Gill J.E."/>
            <person name="Adams M.D."/>
            <person name="Carrera A.J."/>
            <person name="Creasy T.H."/>
            <person name="Goodman H.M."/>
            <person name="Somerville C.R."/>
            <person name="Copenhaver G.P."/>
            <person name="Preuss D."/>
            <person name="Nierman W.C."/>
            <person name="White O."/>
            <person name="Eisen J.A."/>
            <person name="Salzberg S.L."/>
            <person name="Fraser C.M."/>
            <person name="Venter J.C."/>
        </authorList>
    </citation>
    <scope>NUCLEOTIDE SEQUENCE [LARGE SCALE GENOMIC DNA]</scope>
    <source>
        <strain>cv. Columbia</strain>
    </source>
</reference>
<reference key="3">
    <citation type="journal article" date="2017" name="Plant J.">
        <title>Araport11: a complete reannotation of the Arabidopsis thaliana reference genome.</title>
        <authorList>
            <person name="Cheng C.Y."/>
            <person name="Krishnakumar V."/>
            <person name="Chan A.P."/>
            <person name="Thibaud-Nissen F."/>
            <person name="Schobel S."/>
            <person name="Town C.D."/>
        </authorList>
    </citation>
    <scope>GENOME REANNOTATION</scope>
    <source>
        <strain>cv. Columbia</strain>
    </source>
</reference>
<reference key="4">
    <citation type="journal article" date="2003" name="Science">
        <title>Empirical analysis of transcriptional activity in the Arabidopsis genome.</title>
        <authorList>
            <person name="Yamada K."/>
            <person name="Lim J."/>
            <person name="Dale J.M."/>
            <person name="Chen H."/>
            <person name="Shinn P."/>
            <person name="Palm C.J."/>
            <person name="Southwick A.M."/>
            <person name="Wu H.C."/>
            <person name="Kim C.J."/>
            <person name="Nguyen M."/>
            <person name="Pham P.K."/>
            <person name="Cheuk R.F."/>
            <person name="Karlin-Newmann G."/>
            <person name="Liu S.X."/>
            <person name="Lam B."/>
            <person name="Sakano H."/>
            <person name="Wu T."/>
            <person name="Yu G."/>
            <person name="Miranda M."/>
            <person name="Quach H.L."/>
            <person name="Tripp M."/>
            <person name="Chang C.H."/>
            <person name="Lee J.M."/>
            <person name="Toriumi M.J."/>
            <person name="Chan M.M."/>
            <person name="Tang C.C."/>
            <person name="Onodera C.S."/>
            <person name="Deng J.M."/>
            <person name="Akiyama K."/>
            <person name="Ansari Y."/>
            <person name="Arakawa T."/>
            <person name="Banh J."/>
            <person name="Banno F."/>
            <person name="Bowser L."/>
            <person name="Brooks S.Y."/>
            <person name="Carninci P."/>
            <person name="Chao Q."/>
            <person name="Choy N."/>
            <person name="Enju A."/>
            <person name="Goldsmith A.D."/>
            <person name="Gurjal M."/>
            <person name="Hansen N.F."/>
            <person name="Hayashizaki Y."/>
            <person name="Johnson-Hopson C."/>
            <person name="Hsuan V.W."/>
            <person name="Iida K."/>
            <person name="Karnes M."/>
            <person name="Khan S."/>
            <person name="Koesema E."/>
            <person name="Ishida J."/>
            <person name="Jiang P.X."/>
            <person name="Jones T."/>
            <person name="Kawai J."/>
            <person name="Kamiya A."/>
            <person name="Meyers C."/>
            <person name="Nakajima M."/>
            <person name="Narusaka M."/>
            <person name="Seki M."/>
            <person name="Sakurai T."/>
            <person name="Satou M."/>
            <person name="Tamse R."/>
            <person name="Vaysberg M."/>
            <person name="Wallender E.K."/>
            <person name="Wong C."/>
            <person name="Yamamura Y."/>
            <person name="Yuan S."/>
            <person name="Shinozaki K."/>
            <person name="Davis R.W."/>
            <person name="Theologis A."/>
            <person name="Ecker J.R."/>
        </authorList>
    </citation>
    <scope>NUCLEOTIDE SEQUENCE [LARGE SCALE MRNA]</scope>
    <source>
        <strain>cv. Columbia</strain>
    </source>
</reference>
<reference key="5">
    <citation type="submission" date="2002-03" db="EMBL/GenBank/DDBJ databases">
        <title>Full-length cDNA from Arabidopsis thaliana.</title>
        <authorList>
            <person name="Brover V.V."/>
            <person name="Troukhan M.E."/>
            <person name="Alexandrov N.A."/>
            <person name="Lu Y.-P."/>
            <person name="Flavell R.B."/>
            <person name="Feldmann K.A."/>
        </authorList>
    </citation>
    <scope>NUCLEOTIDE SEQUENCE [LARGE SCALE MRNA]</scope>
</reference>
<reference key="6">
    <citation type="journal article" date="2004" name="Plant Cell">
        <title>Experimental analysis of the Arabidopsis mitochondrial proteome highlights signaling and regulatory components, provides assessment of targeting prediction programs, and indicates plant-specific mitochondrial proteins.</title>
        <authorList>
            <person name="Heazlewood J.L."/>
            <person name="Tonti-Filippini J.S."/>
            <person name="Gout A.M."/>
            <person name="Day D.A."/>
            <person name="Whelan J."/>
            <person name="Millar A.H."/>
        </authorList>
    </citation>
    <scope>IDENTIFICATION BY MASS SPECTROMETRY</scope>
    <scope>SUBCELLULAR LOCATION [LARGE SCALE ANALYSIS]</scope>
    <source>
        <strain>cv. Landsberg erecta</strain>
    </source>
</reference>
<reference key="7">
    <citation type="journal article" date="2007" name="Mol. Cell. Proteomics">
        <title>Multidimensional protein identification technology (MudPIT) analysis of ubiquitinated proteins in plants.</title>
        <authorList>
            <person name="Maor R."/>
            <person name="Jones A."/>
            <person name="Nuehse T.S."/>
            <person name="Studholme D.J."/>
            <person name="Peck S.C."/>
            <person name="Shirasu K."/>
        </authorList>
    </citation>
    <scope>IDENTIFICATION BY MASS SPECTROMETRY [LARGE SCALE ANALYSIS]</scope>
    <source>
        <strain>cv. Landsberg erecta</strain>
    </source>
</reference>
<comment type="function">
    <text>Mitochondrial membrane ATP synthase (F(1)F(0) ATP synthase or Complex V) produces ATP from ADP in the presence of a proton gradient across the membrane which is generated by electron transport complexes of the respiratory chain. F-type ATPases consist of two structural domains, F(1) - containing the extramembraneous catalytic core, and F(0) - containing the membrane proton channel, linked together by a central stalk and a peripheral stalk. During catalysis, ATP synthesis in the catalytic domain of F(1) is coupled via a rotary mechanism of the central stalk subunits to proton translocation. Part of the complex F(1) domain and the central stalk which is part of the complex rotary element. The gamma subunit protrudes into the catalytic domain formed of alpha(3)beta(3). Rotation of the central stalk against the surrounding alpha(3)beta(3) subunits leads to hydrolysis of ATP in three separate catalytic sites on the beta subunits.</text>
</comment>
<comment type="subunit">
    <text>F-type ATPases have 2 components, CF(1) - the catalytic core - and CF(0) - the membrane proton channel. CF(1) has five subunits: alpha(3), beta(3), gamma(1), delta(1), epsilon(1). CF(0) has three main subunits: a, b and c.</text>
</comment>
<comment type="subcellular location">
    <subcellularLocation>
        <location evidence="1">Mitochondrion</location>
    </subcellularLocation>
    <subcellularLocation>
        <location evidence="3">Mitochondrion inner membrane</location>
        <topology evidence="3">Peripheral membrane protein</topology>
    </subcellularLocation>
</comment>
<comment type="similarity">
    <text evidence="2">Belongs to the ATPase gamma chain family.</text>
</comment>
<organism>
    <name type="scientific">Arabidopsis thaliana</name>
    <name type="common">Mouse-ear cress</name>
    <dbReference type="NCBI Taxonomy" id="3702"/>
    <lineage>
        <taxon>Eukaryota</taxon>
        <taxon>Viridiplantae</taxon>
        <taxon>Streptophyta</taxon>
        <taxon>Embryophyta</taxon>
        <taxon>Tracheophyta</taxon>
        <taxon>Spermatophyta</taxon>
        <taxon>Magnoliopsida</taxon>
        <taxon>eudicotyledons</taxon>
        <taxon>Gunneridae</taxon>
        <taxon>Pentapetalae</taxon>
        <taxon>rosids</taxon>
        <taxon>malvids</taxon>
        <taxon>Brassicales</taxon>
        <taxon>Brassicaceae</taxon>
        <taxon>Camelineae</taxon>
        <taxon>Arabidopsis</taxon>
    </lineage>
</organism>
<evidence type="ECO:0000269" key="1">
    <source>
    </source>
</evidence>
<evidence type="ECO:0000305" key="2"/>
<evidence type="ECO:0000305" key="3">
    <source>
    </source>
</evidence>
<protein>
    <recommendedName>
        <fullName>ATP synthase subunit gamma, mitochondrial</fullName>
    </recommendedName>
    <alternativeName>
        <fullName>F-ATPase gamma subunit</fullName>
    </alternativeName>
</protein>